<feature type="signal peptide" evidence="3">
    <location>
        <begin position="1"/>
        <end position="34"/>
    </location>
</feature>
<feature type="chain" id="PRO_0000287095" description="Cell adhesion molecule CEACAM2">
    <location>
        <begin position="35"/>
        <end position="520"/>
    </location>
</feature>
<feature type="topological domain" description="Extracellular" evidence="3">
    <location>
        <begin position="35"/>
        <end position="422"/>
    </location>
</feature>
<feature type="transmembrane region" description="Helical" evidence="3">
    <location>
        <begin position="423"/>
        <end position="443"/>
    </location>
</feature>
<feature type="topological domain" description="Cytoplasmic" evidence="3">
    <location>
        <begin position="444"/>
        <end position="520"/>
    </location>
</feature>
<feature type="domain" description="Ig-like V-type">
    <location>
        <begin position="35"/>
        <end position="141"/>
    </location>
</feature>
<feature type="domain" description="Ig-like C2-type 1">
    <location>
        <begin position="145"/>
        <end position="234"/>
    </location>
</feature>
<feature type="domain" description="Ig-like C2-type 2">
    <location>
        <begin position="239"/>
        <end position="319"/>
    </location>
</feature>
<feature type="domain" description="Ig-like C2-type 3">
    <location>
        <begin position="327"/>
        <end position="411"/>
    </location>
</feature>
<feature type="region of interest" description="Disordered" evidence="5">
    <location>
        <begin position="457"/>
        <end position="520"/>
    </location>
</feature>
<feature type="compositionally biased region" description="Polar residues" evidence="5">
    <location>
        <begin position="466"/>
        <end position="480"/>
    </location>
</feature>
<feature type="compositionally biased region" description="Polar residues" evidence="5">
    <location>
        <begin position="490"/>
        <end position="513"/>
    </location>
</feature>
<feature type="modified residue" description="Phosphotyrosine" evidence="2">
    <location>
        <position position="487"/>
    </location>
</feature>
<feature type="modified residue" description="Phosphoserine" evidence="1">
    <location>
        <position position="502"/>
    </location>
</feature>
<feature type="modified residue" description="Phosphotyrosine" evidence="2">
    <location>
        <position position="514"/>
    </location>
</feature>
<feature type="glycosylation site" description="N-linked (GlcNAc...) asparagine" evidence="3">
    <location>
        <position position="87"/>
    </location>
</feature>
<feature type="glycosylation site" description="N-linked (GlcNAc...) asparagine" evidence="3">
    <location>
        <position position="104"/>
    </location>
</feature>
<feature type="glycosylation site" description="N-linked (GlcNAc...) asparagine" evidence="3">
    <location>
        <position position="148"/>
    </location>
</feature>
<feature type="glycosylation site" description="N-linked (GlcNAc...) asparagine" evidence="3">
    <location>
        <position position="152"/>
    </location>
</feature>
<feature type="glycosylation site" description="N-linked (GlcNAc...) asparagine" evidence="3">
    <location>
        <position position="175"/>
    </location>
</feature>
<feature type="glycosylation site" description="N-linked (GlcNAc...) asparagine" evidence="3">
    <location>
        <position position="199"/>
    </location>
</feature>
<feature type="glycosylation site" description="N-linked (GlcNAc...) asparagine" evidence="8">
    <location>
        <position position="206"/>
    </location>
</feature>
<feature type="glycosylation site" description="N-linked (GlcNAc...) asparagine" evidence="8">
    <location>
        <position position="210"/>
    </location>
</feature>
<feature type="glycosylation site" description="N-linked (GlcNAc...) asparagine" evidence="3">
    <location>
        <position position="226"/>
    </location>
</feature>
<feature type="glycosylation site" description="N-linked (GlcNAc...) asparagine" evidence="3">
    <location>
        <position position="258"/>
    </location>
</feature>
<feature type="glycosylation site" description="N-linked (GlcNAc...) asparagine" evidence="3">
    <location>
        <position position="290"/>
    </location>
</feature>
<feature type="glycosylation site" description="N-linked (GlcNAc...) asparagine" evidence="3">
    <location>
        <position position="294"/>
    </location>
</feature>
<feature type="glycosylation site" description="N-linked (GlcNAc...) asparagine" evidence="3">
    <location>
        <position position="304"/>
    </location>
</feature>
<feature type="glycosylation site" description="N-linked (GlcNAc...) asparagine" evidence="3">
    <location>
        <position position="317"/>
    </location>
</feature>
<feature type="glycosylation site" description="N-linked (GlcNAc...) asparagine" evidence="3">
    <location>
        <position position="333"/>
    </location>
</feature>
<feature type="glycosylation site" description="N-linked (GlcNAc...) asparagine" evidence="3">
    <location>
        <position position="361"/>
    </location>
</feature>
<feature type="disulfide bond" evidence="4">
    <location>
        <begin position="167"/>
        <end position="217"/>
    </location>
</feature>
<feature type="disulfide bond" evidence="4">
    <location>
        <begin position="261"/>
        <end position="301"/>
    </location>
</feature>
<feature type="disulfide bond" evidence="4">
    <location>
        <begin position="346"/>
        <end position="394"/>
    </location>
</feature>
<feature type="splice variant" id="VSP_025300" description="In isoform 2 and isoform 3." evidence="14 15 16 17">
    <original>TLLLKSNITSNNSNPVEGDDSVSLTCDSYTDPDNITYLWSRNGESLSEGDRLKLSEGNRTLTLLNVTRNDTGPYVCETRNPVSVNRSDPFSLNIIYGPDTPIISPSDIYLHPGSNLNLSCHAASNPPAQYFWLINEKPHASSQELFIPNITTNNSGTYTCFVNNSVTGLSRTTVKNITVLE</original>
    <variation>K</variation>
    <location>
        <begin position="142"/>
        <end position="322"/>
    </location>
</feature>
<feature type="splice variant" id="VSP_025301" description="In isoform 3." evidence="14 15 17">
    <location>
        <begin position="453"/>
        <end position="520"/>
    </location>
</feature>
<feature type="sequence conflict" description="In Ref. 2; AAK52602 and 3; BAI49177." evidence="18" ref="2 3">
    <original>F</original>
    <variation>V</variation>
    <location>
        <position position="16"/>
    </location>
</feature>
<feature type="sequence conflict" description="In Ref. 2; AAK52602." evidence="18" ref="2">
    <original>S</original>
    <variation>L</variation>
    <location>
        <position position="63"/>
    </location>
</feature>
<feature type="sequence conflict" description="In Ref. 2; AAK52602." evidence="18" ref="2">
    <original>T</original>
    <variation>A</variation>
    <location>
        <position position="100"/>
    </location>
</feature>
<feature type="sequence conflict" description="In Ref. 2; AAK52602." evidence="18" ref="2">
    <original>N</original>
    <variation>D</variation>
    <location>
        <position position="128"/>
    </location>
</feature>
<feature type="sequence conflict" description="In Ref. 2; AAK52602." evidence="18" ref="2">
    <original>F</original>
    <variation>L</variation>
    <location>
        <position position="302"/>
    </location>
</feature>
<feature type="sequence conflict" description="In Ref. 2; AAK52602." evidence="18" ref="2">
    <original>R</original>
    <variation>S</variation>
    <location>
        <position position="351"/>
    </location>
</feature>
<feature type="sequence conflict" description="In Ref. 2; AAK52602." evidence="18" ref="2">
    <original>S</original>
    <variation>L</variation>
    <location>
        <position position="421"/>
    </location>
</feature>
<feature type="sequence conflict" description="In Ref. 1; AAC99458." evidence="18" ref="1">
    <original>A</original>
    <variation>T</variation>
    <location>
        <position position="467"/>
    </location>
</feature>
<name>CEAM2_MOUSE</name>
<organism>
    <name type="scientific">Mus musculus</name>
    <name type="common">Mouse</name>
    <dbReference type="NCBI Taxonomy" id="10090"/>
    <lineage>
        <taxon>Eukaryota</taxon>
        <taxon>Metazoa</taxon>
        <taxon>Chordata</taxon>
        <taxon>Craniata</taxon>
        <taxon>Vertebrata</taxon>
        <taxon>Euteleostomi</taxon>
        <taxon>Mammalia</taxon>
        <taxon>Eutheria</taxon>
        <taxon>Euarchontoglires</taxon>
        <taxon>Glires</taxon>
        <taxon>Rodentia</taxon>
        <taxon>Myomorpha</taxon>
        <taxon>Muroidea</taxon>
        <taxon>Muridae</taxon>
        <taxon>Murinae</taxon>
        <taxon>Mus</taxon>
        <taxon>Mus</taxon>
    </lineage>
</organism>
<gene>
    <name evidence="19" type="primary">Ceacam2</name>
    <name evidence="17" type="synonym">Bgp2</name>
</gene>
<dbReference type="EMBL" id="AF101164">
    <property type="protein sequence ID" value="AAC99458.1"/>
    <property type="molecule type" value="mRNA"/>
</dbReference>
<dbReference type="EMBL" id="X76085">
    <property type="protein sequence ID" value="CAA53699.1"/>
    <property type="molecule type" value="mRNA"/>
</dbReference>
<dbReference type="EMBL" id="AF287912">
    <property type="protein sequence ID" value="AAK52602.1"/>
    <property type="molecule type" value="Genomic_DNA"/>
</dbReference>
<dbReference type="EMBL" id="AB500065">
    <property type="protein sequence ID" value="BAI49177.1"/>
    <property type="molecule type" value="mRNA"/>
</dbReference>
<dbReference type="EMBL" id="AB731450">
    <property type="protein sequence ID" value="BAM29120.1"/>
    <property type="molecule type" value="mRNA"/>
</dbReference>
<dbReference type="EMBL" id="AC162443">
    <property type="status" value="NOT_ANNOTATED_CDS"/>
    <property type="molecule type" value="Genomic_DNA"/>
</dbReference>
<dbReference type="EMBL" id="BC024320">
    <property type="protein sequence ID" value="AAH24320.1"/>
    <property type="molecule type" value="mRNA"/>
</dbReference>
<dbReference type="CCDS" id="CCDS20986.1">
    <molecule id="Q925P2-3"/>
</dbReference>
<dbReference type="CCDS" id="CCDS52152.1">
    <molecule id="Q925P2-2"/>
</dbReference>
<dbReference type="CCDS" id="CCDS52153.1">
    <molecule id="Q925P2-1"/>
</dbReference>
<dbReference type="PIR" id="I48268">
    <property type="entry name" value="I48268"/>
</dbReference>
<dbReference type="RefSeq" id="NP_001106839.1">
    <molecule id="Q925P2-1"/>
    <property type="nucleotide sequence ID" value="NM_001113368.1"/>
</dbReference>
<dbReference type="RefSeq" id="NP_001106840.1">
    <molecule id="Q925P2-2"/>
    <property type="nucleotide sequence ID" value="NM_001113369.1"/>
</dbReference>
<dbReference type="RefSeq" id="NP_031569.1">
    <molecule id="Q925P2-3"/>
    <property type="nucleotide sequence ID" value="NM_007543.4"/>
</dbReference>
<dbReference type="SMR" id="Q925P2"/>
<dbReference type="FunCoup" id="Q925P2">
    <property type="interactions" value="79"/>
</dbReference>
<dbReference type="STRING" id="10090.ENSMUSP00000048118"/>
<dbReference type="GlyCosmos" id="Q925P2">
    <property type="glycosylation" value="16 sites, No reported glycans"/>
</dbReference>
<dbReference type="GlyGen" id="Q925P2">
    <property type="glycosylation" value="16 sites, 4 N-linked glycans (5 sites)"/>
</dbReference>
<dbReference type="iPTMnet" id="Q925P2"/>
<dbReference type="PhosphoSitePlus" id="Q925P2"/>
<dbReference type="SwissPalm" id="Q925P2"/>
<dbReference type="PeptideAtlas" id="Q925P2"/>
<dbReference type="ProteomicsDB" id="280049">
    <molecule id="Q925P2-1"/>
</dbReference>
<dbReference type="ProteomicsDB" id="280050">
    <molecule id="Q925P2-2"/>
</dbReference>
<dbReference type="ProteomicsDB" id="280051">
    <molecule id="Q925P2-3"/>
</dbReference>
<dbReference type="ABCD" id="Q925P2">
    <property type="antibodies" value="20 sequenced antibodies"/>
</dbReference>
<dbReference type="DNASU" id="26367"/>
<dbReference type="Ensembl" id="ENSMUST00000044547.10">
    <molecule id="Q925P2-1"/>
    <property type="protein sequence ID" value="ENSMUSP00000048118.9"/>
    <property type="gene ID" value="ENSMUSG00000054385.15"/>
</dbReference>
<dbReference type="Ensembl" id="ENSMUST00000064862.13">
    <molecule id="Q925P2-3"/>
    <property type="protein sequence ID" value="ENSMUSP00000068540.7"/>
    <property type="gene ID" value="ENSMUSG00000054385.15"/>
</dbReference>
<dbReference type="Ensembl" id="ENSMUST00000066503.14">
    <molecule id="Q925P2-2"/>
    <property type="protein sequence ID" value="ENSMUSP00000064255.8"/>
    <property type="gene ID" value="ENSMUSG00000054385.15"/>
</dbReference>
<dbReference type="GeneID" id="26367"/>
<dbReference type="KEGG" id="mmu:26367"/>
<dbReference type="UCSC" id="uc009ftc.2">
    <molecule id="Q925P2-3"/>
    <property type="organism name" value="mouse"/>
</dbReference>
<dbReference type="UCSC" id="uc012ffv.1">
    <molecule id="Q925P2-1"/>
    <property type="organism name" value="mouse"/>
</dbReference>
<dbReference type="UCSC" id="uc012ffw.1">
    <molecule id="Q925P2-2"/>
    <property type="organism name" value="mouse"/>
</dbReference>
<dbReference type="AGR" id="MGI:1347246"/>
<dbReference type="CTD" id="26367"/>
<dbReference type="MGI" id="MGI:1347246">
    <property type="gene designation" value="Ceacam2"/>
</dbReference>
<dbReference type="VEuPathDB" id="HostDB:ENSMUSG00000054385"/>
<dbReference type="GeneTree" id="ENSGT01100000263479"/>
<dbReference type="HOGENOM" id="CLU_024555_4_0_1"/>
<dbReference type="InParanoid" id="Q925P2"/>
<dbReference type="OMA" id="DITILWY"/>
<dbReference type="OrthoDB" id="6159398at2759"/>
<dbReference type="PhylomeDB" id="Q925P2"/>
<dbReference type="TreeFam" id="TF336859"/>
<dbReference type="Reactome" id="R-MMU-163125">
    <property type="pathway name" value="Post-translational modification: synthesis of GPI-anchored proteins"/>
</dbReference>
<dbReference type="Reactome" id="R-MMU-202733">
    <property type="pathway name" value="Cell surface interactions at the vascular wall"/>
</dbReference>
<dbReference type="Reactome" id="R-MMU-6798695">
    <property type="pathway name" value="Neutrophil degranulation"/>
</dbReference>
<dbReference type="BioGRID-ORCS" id="26367">
    <property type="hits" value="2 hits in 79 CRISPR screens"/>
</dbReference>
<dbReference type="PRO" id="PR:Q925P2"/>
<dbReference type="Proteomes" id="UP000000589">
    <property type="component" value="Chromosome 7"/>
</dbReference>
<dbReference type="RNAct" id="Q925P2">
    <property type="molecule type" value="protein"/>
</dbReference>
<dbReference type="Bgee" id="ENSMUSG00000054385">
    <property type="expression patterns" value="Expressed in spermatid and 59 other cell types or tissues"/>
</dbReference>
<dbReference type="GO" id="GO:0009986">
    <property type="term" value="C:cell surface"/>
    <property type="evidence" value="ECO:0000314"/>
    <property type="project" value="MGI"/>
</dbReference>
<dbReference type="GO" id="GO:0009897">
    <property type="term" value="C:external side of plasma membrane"/>
    <property type="evidence" value="ECO:0000314"/>
    <property type="project" value="MGI"/>
</dbReference>
<dbReference type="GO" id="GO:0005886">
    <property type="term" value="C:plasma membrane"/>
    <property type="evidence" value="ECO:0007669"/>
    <property type="project" value="UniProtKB-SubCell"/>
</dbReference>
<dbReference type="GO" id="GO:0097009">
    <property type="term" value="P:energy homeostasis"/>
    <property type="evidence" value="ECO:0000315"/>
    <property type="project" value="MGI"/>
</dbReference>
<dbReference type="GO" id="GO:0070348">
    <property type="term" value="P:negative regulation of brown fat cell proliferation"/>
    <property type="evidence" value="ECO:0000315"/>
    <property type="project" value="MGI"/>
</dbReference>
<dbReference type="GO" id="GO:2000252">
    <property type="term" value="P:negative regulation of feeding behavior"/>
    <property type="evidence" value="ECO:0000315"/>
    <property type="project" value="MGI"/>
</dbReference>
<dbReference type="CDD" id="cd20948">
    <property type="entry name" value="IgC2_CEACAM5-like"/>
    <property type="match status" value="1"/>
</dbReference>
<dbReference type="CDD" id="cd05740">
    <property type="entry name" value="IgI_hCEACAM_2_4_6_like"/>
    <property type="match status" value="1"/>
</dbReference>
<dbReference type="CDD" id="cd05774">
    <property type="entry name" value="IgV_CEACAM_D1"/>
    <property type="match status" value="1"/>
</dbReference>
<dbReference type="FunFam" id="2.60.40.10:FF:000340">
    <property type="entry name" value="Carcinoembryonic antigen-related cell adhesion molecule 1"/>
    <property type="match status" value="1"/>
</dbReference>
<dbReference type="FunFam" id="2.60.40.10:FF:000517">
    <property type="entry name" value="Carcinoembryonic antigen-related cell adhesion molecule 1"/>
    <property type="match status" value="1"/>
</dbReference>
<dbReference type="FunFam" id="2.60.40.10:FF:000244">
    <property type="entry name" value="carcinoembryonic antigen-related cell adhesion molecule 16"/>
    <property type="match status" value="2"/>
</dbReference>
<dbReference type="Gene3D" id="2.60.40.10">
    <property type="entry name" value="Immunoglobulins"/>
    <property type="match status" value="4"/>
</dbReference>
<dbReference type="InterPro" id="IPR050831">
    <property type="entry name" value="CEA_cell_adhesion"/>
</dbReference>
<dbReference type="InterPro" id="IPR007110">
    <property type="entry name" value="Ig-like_dom"/>
</dbReference>
<dbReference type="InterPro" id="IPR036179">
    <property type="entry name" value="Ig-like_dom_sf"/>
</dbReference>
<dbReference type="InterPro" id="IPR013783">
    <property type="entry name" value="Ig-like_fold"/>
</dbReference>
<dbReference type="InterPro" id="IPR003599">
    <property type="entry name" value="Ig_sub"/>
</dbReference>
<dbReference type="InterPro" id="IPR003598">
    <property type="entry name" value="Ig_sub2"/>
</dbReference>
<dbReference type="InterPro" id="IPR013106">
    <property type="entry name" value="Ig_V-set"/>
</dbReference>
<dbReference type="InterPro" id="IPR013151">
    <property type="entry name" value="Immunoglobulin_dom"/>
</dbReference>
<dbReference type="PANTHER" id="PTHR44427:SF1">
    <property type="entry name" value="CARCINOEMBRYONIC ANTIGEN-RELATED CELL ADHESION MOLECULE 1"/>
    <property type="match status" value="1"/>
</dbReference>
<dbReference type="PANTHER" id="PTHR44427">
    <property type="entry name" value="CARCINOEMBRYONIC ANTIGEN-RELATED CELL ADHESION MOLECULE 19"/>
    <property type="match status" value="1"/>
</dbReference>
<dbReference type="Pfam" id="PF00047">
    <property type="entry name" value="ig"/>
    <property type="match status" value="1"/>
</dbReference>
<dbReference type="Pfam" id="PF13895">
    <property type="entry name" value="Ig_2"/>
    <property type="match status" value="1"/>
</dbReference>
<dbReference type="Pfam" id="PF13927">
    <property type="entry name" value="Ig_3"/>
    <property type="match status" value="1"/>
</dbReference>
<dbReference type="Pfam" id="PF07686">
    <property type="entry name" value="V-set"/>
    <property type="match status" value="1"/>
</dbReference>
<dbReference type="SMART" id="SM00409">
    <property type="entry name" value="IG"/>
    <property type="match status" value="4"/>
</dbReference>
<dbReference type="SMART" id="SM00408">
    <property type="entry name" value="IGc2"/>
    <property type="match status" value="3"/>
</dbReference>
<dbReference type="SUPFAM" id="SSF48726">
    <property type="entry name" value="Immunoglobulin"/>
    <property type="match status" value="4"/>
</dbReference>
<dbReference type="PROSITE" id="PS50835">
    <property type="entry name" value="IG_LIKE"/>
    <property type="match status" value="3"/>
</dbReference>
<accession>Q925P2</accession>
<accession>D0VY57</accession>
<accession>E9QLI9</accession>
<accession>I7HDK2</accession>
<accession>Q61349</accession>
<accession>Q8R1N5</accession>
<proteinExistence type="evidence at protein level"/>
<evidence type="ECO:0000250" key="1">
    <source>
        <dbReference type="UniProtKB" id="P16573"/>
    </source>
</evidence>
<evidence type="ECO:0000250" key="2">
    <source>
        <dbReference type="UniProtKB" id="P31809"/>
    </source>
</evidence>
<evidence type="ECO:0000255" key="3"/>
<evidence type="ECO:0000255" key="4">
    <source>
        <dbReference type="PROSITE-ProRule" id="PRU00114"/>
    </source>
</evidence>
<evidence type="ECO:0000256" key="5">
    <source>
        <dbReference type="SAM" id="MobiDB-lite"/>
    </source>
</evidence>
<evidence type="ECO:0000269" key="6">
    <source>
    </source>
</evidence>
<evidence type="ECO:0000269" key="7">
    <source>
    </source>
</evidence>
<evidence type="ECO:0000269" key="8">
    <source>
    </source>
</evidence>
<evidence type="ECO:0000269" key="9">
    <source>
    </source>
</evidence>
<evidence type="ECO:0000269" key="10">
    <source>
    </source>
</evidence>
<evidence type="ECO:0000269" key="11">
    <source>
    </source>
</evidence>
<evidence type="ECO:0000269" key="12">
    <source>
    </source>
</evidence>
<evidence type="ECO:0000269" key="13">
    <source>
    </source>
</evidence>
<evidence type="ECO:0000303" key="14">
    <source>
    </source>
</evidence>
<evidence type="ECO:0000303" key="15">
    <source>
    </source>
</evidence>
<evidence type="ECO:0000303" key="16">
    <source>
    </source>
</evidence>
<evidence type="ECO:0000303" key="17">
    <source>
    </source>
</evidence>
<evidence type="ECO:0000305" key="18"/>
<evidence type="ECO:0000312" key="19">
    <source>
        <dbReference type="MGI" id="MGI:1347246"/>
    </source>
</evidence>
<protein>
    <recommendedName>
        <fullName evidence="18">Cell adhesion molecule CEACAM2</fullName>
    </recommendedName>
    <alternativeName>
        <fullName evidence="17">Biliary glycoprotein 2</fullName>
        <shortName evidence="17">BGP-2</shortName>
    </alternativeName>
    <alternativeName>
        <fullName>Carcinoembryonic antigen-related cell adhesion molecule 2</fullName>
        <shortName evidence="19">CEA-related cell adhesion molecule 2</shortName>
    </alternativeName>
</protein>
<keyword id="KW-0025">Alternative splicing</keyword>
<keyword id="KW-1003">Cell membrane</keyword>
<keyword id="KW-1015">Disulfide bond</keyword>
<keyword id="KW-0325">Glycoprotein</keyword>
<keyword id="KW-0945">Host-virus interaction</keyword>
<keyword id="KW-0393">Immunoglobulin domain</keyword>
<keyword id="KW-0472">Membrane</keyword>
<keyword id="KW-0597">Phosphoprotein</keyword>
<keyword id="KW-0675">Receptor</keyword>
<keyword id="KW-1185">Reference proteome</keyword>
<keyword id="KW-0677">Repeat</keyword>
<keyword id="KW-0732">Signal</keyword>
<keyword id="KW-0812">Transmembrane</keyword>
<keyword id="KW-1133">Transmembrane helix</keyword>
<reference key="1">
    <citation type="journal article" date="1994" name="J. Virol.">
        <title>Bgp2, a new member of the carcinoembryonic antigen-related gene family, encodes an alternative receptor for mouse hepatitis viruses.</title>
        <authorList>
            <person name="Nedellec P."/>
            <person name="Dveksler G.S."/>
            <person name="Daniels E."/>
            <person name="Turbide C."/>
            <person name="Chow B."/>
            <person name="Basile A.A."/>
            <person name="Holmes K.V."/>
            <person name="Beauchemin N."/>
        </authorList>
    </citation>
    <scope>NUCLEOTIDE SEQUENCE [MRNA] (ISOFORMS 2 AND 3)</scope>
    <scope>INTERACTION WITH MHV SPIKE GLYCOPROTEIN</scope>
    <scope>TISSUE SPECIFICITY</scope>
    <source>
        <strain>BALB/cJ</strain>
        <tissue>Kidney</tissue>
    </source>
</reference>
<reference key="2">
    <citation type="journal article" date="2001" name="Biochem. J.">
        <title>Differences in tissue-specific and embryonic expression of mouse Ceacam1 and Ceacam2 genes.</title>
        <authorList>
            <person name="Han E."/>
            <person name="Phan D."/>
            <person name="Lo P."/>
            <person name="Poy M.N."/>
            <person name="Behringer R."/>
            <person name="Najjar S.M."/>
            <person name="Lin S.-H."/>
        </authorList>
    </citation>
    <scope>NUCLEOTIDE SEQUENCE [GENOMIC DNA]</scope>
    <scope>ALTERNATIVE SPLICING (ISOFORMS 1 AND 3)</scope>
    <scope>TISSUE SPECIFICITY</scope>
    <scope>DEVELOPMENTAL STAGE</scope>
    <source>
        <strain>129/SvEv</strain>
    </source>
</reference>
<reference key="3">
    <citation type="journal article" date="2010" name="J. Virol.">
        <title>Role of mouse hepatitis virus (MHV) receptor murine CEACAM1 in the resistance of mice to MHV infection: studies of mice with chimeric mCEACAM1a and mCEACAM1b.</title>
        <authorList>
            <person name="Hirai A."/>
            <person name="Ohtsuka N."/>
            <person name="Ikeda T."/>
            <person name="Taniguchi R."/>
            <person name="Blau D."/>
            <person name="Nakagaki K."/>
            <person name="Miura H.S."/>
            <person name="Ami Y."/>
            <person name="Yamada Y.K."/>
            <person name="Itohara S."/>
            <person name="Holmes K.V."/>
            <person name="Taguchi F."/>
        </authorList>
    </citation>
    <scope>NUCLEOTIDE SEQUENCE [MRNA] (ISOFORM 3)</scope>
    <source>
        <strain>SJL/J</strain>
        <tissue>Liver</tissue>
    </source>
</reference>
<reference key="4">
    <citation type="journal article" date="2012" name="Mol. Reprod. Dev.">
        <title>Molecular cloning and localization of a CEACAM2 isoform, CEACAM2-L, expressed in spermatids in mouse testis.</title>
        <authorList>
            <person name="Salaheldeen E."/>
            <person name="Kurio H."/>
            <person name="Howida A."/>
            <person name="Iida H."/>
        </authorList>
    </citation>
    <scope>NUCLEOTIDE SEQUENCE [MRNA] (ISOFORM 2)</scope>
    <scope>FUNCTION</scope>
    <scope>SUBCELLULAR LOCATION</scope>
    <scope>DEVELOPMENTAL STAGE</scope>
    <scope>TISSUE SPECIFICITY</scope>
    <source>
        <strain>ddY</strain>
        <tissue>Testis</tissue>
    </source>
</reference>
<reference key="5">
    <citation type="journal article" date="2009" name="PLoS Biol.">
        <title>Lineage-specific biology revealed by a finished genome assembly of the mouse.</title>
        <authorList>
            <person name="Church D.M."/>
            <person name="Goodstadt L."/>
            <person name="Hillier L.W."/>
            <person name="Zody M.C."/>
            <person name="Goldstein S."/>
            <person name="She X."/>
            <person name="Bult C.J."/>
            <person name="Agarwala R."/>
            <person name="Cherry J.L."/>
            <person name="DiCuccio M."/>
            <person name="Hlavina W."/>
            <person name="Kapustin Y."/>
            <person name="Meric P."/>
            <person name="Maglott D."/>
            <person name="Birtle Z."/>
            <person name="Marques A.C."/>
            <person name="Graves T."/>
            <person name="Zhou S."/>
            <person name="Teague B."/>
            <person name="Potamousis K."/>
            <person name="Churas C."/>
            <person name="Place M."/>
            <person name="Herschleb J."/>
            <person name="Runnheim R."/>
            <person name="Forrest D."/>
            <person name="Amos-Landgraf J."/>
            <person name="Schwartz D.C."/>
            <person name="Cheng Z."/>
            <person name="Lindblad-Toh K."/>
            <person name="Eichler E.E."/>
            <person name="Ponting C.P."/>
        </authorList>
    </citation>
    <scope>NUCLEOTIDE SEQUENCE [LARGE SCALE GENOMIC DNA]</scope>
    <source>
        <strain>C57BL/6J</strain>
    </source>
</reference>
<reference key="6">
    <citation type="journal article" date="2004" name="Genome Res.">
        <title>The status, quality, and expansion of the NIH full-length cDNA project: the Mammalian Gene Collection (MGC).</title>
        <authorList>
            <consortium name="The MGC Project Team"/>
        </authorList>
    </citation>
    <scope>NUCLEOTIDE SEQUENCE [LARGE SCALE MRNA] (ISOFORM 3)</scope>
    <source>
        <strain>FVB/N</strain>
        <tissue>Kidney</tissue>
    </source>
</reference>
<reference key="7">
    <citation type="journal article" date="1998" name="J. Virol.">
        <title>Purified, soluble recombinant mouse hepatitis virus receptor, Bgp1(b), and Bgp2 murine coronavirus receptors differ in mouse hepatitis virus binding and neutralizing activities.</title>
        <authorList>
            <person name="Zelus B.D."/>
            <person name="Wessner D.R."/>
            <person name="Williams R.K."/>
            <person name="Pensiero M.N."/>
            <person name="Phibbs F.T."/>
            <person name="deSouza M."/>
            <person name="Dveksler G.S."/>
            <person name="Holmes K.V."/>
        </authorList>
    </citation>
    <scope>INTERACTION WITH MHV SPIKE GLYCOPROTEIN</scope>
</reference>
<reference key="8">
    <citation type="journal article" date="1999" name="Eur. J. Biochem.">
        <title>Comparison of expression patterns and cell adhesion properties of the mouse biliary glycoproteins Bbgp1 and Bbgp2.</title>
        <authorList>
            <person name="Robitaille J."/>
            <person name="Izzi L."/>
            <person name="Daniels E."/>
            <person name="Zelus B."/>
            <person name="Holmes K.V."/>
            <person name="Beauchemin N."/>
        </authorList>
    </citation>
    <scope>ALTERNATIVE SPLICING</scope>
    <scope>TISSUE SPECIFICITY</scope>
</reference>
<reference key="9">
    <citation type="journal article" date="2009" name="Nat. Biotechnol.">
        <title>Mass-spectrometric identification and relative quantification of N-linked cell surface glycoproteins.</title>
        <authorList>
            <person name="Wollscheid B."/>
            <person name="Bausch-Fluck D."/>
            <person name="Henderson C."/>
            <person name="O'Brien R."/>
            <person name="Bibel M."/>
            <person name="Schiess R."/>
            <person name="Aebersold R."/>
            <person name="Watts J.D."/>
        </authorList>
    </citation>
    <scope>GLYCOSYLATION [LARGE SCALE ANALYSIS] AT ASN-206 AND ASN-210</scope>
</reference>
<reference key="10">
    <citation type="journal article" date="2010" name="Gastroenterology">
        <title>Carcinoembryonic antigen-related cell adhesion molecule 2 controls energy balance and peripheral insulin action in mice.</title>
        <authorList>
            <person name="Heinrich G."/>
            <person name="Ghosh S."/>
            <person name="Deangelis A.M."/>
            <person name="Schroeder-Gloeckler J.M."/>
            <person name="Patel P.R."/>
            <person name="Castaneda T.R."/>
            <person name="Jeffers S."/>
            <person name="Lee A.D."/>
            <person name="Jung D.Y."/>
            <person name="Zhang Z."/>
            <person name="Opland D.M."/>
            <person name="Myers M.G. Jr."/>
            <person name="Kim J.K."/>
            <person name="Najjar S.M."/>
        </authorList>
    </citation>
    <scope>FUNCTION</scope>
    <scope>TISSUE SPECIFICITY</scope>
    <scope>INDUCTION BY FASTING</scope>
    <scope>DISRUPTION PHENOTYPE</scope>
</reference>
<reference key="11">
    <citation type="journal article" date="2012" name="Diabetologia">
        <title>Increased metabolic rate and insulin sensitivity in male mice lacking the carcino-embryonic antigen-related cell adhesion molecule 2.</title>
        <authorList>
            <person name="Patel P.R."/>
            <person name="Ramakrishnan S.K."/>
            <person name="Kaw M.K."/>
            <person name="Raphael C.K."/>
            <person name="Ghosh S."/>
            <person name="Marino J.S."/>
            <person name="Heinrich G."/>
            <person name="Lee S.J."/>
            <person name="Bourey R.E."/>
            <person name="Hill J.W."/>
            <person name="Jung D.Y."/>
            <person name="Morgan D.A."/>
            <person name="Kim J.K."/>
            <person name="Rahmouni K."/>
            <person name="Najjar S.M."/>
        </authorList>
    </citation>
    <scope>FUNCTION</scope>
    <scope>DISRUPTION PHENOTYPE</scope>
</reference>
<sequence>MELASAHLHKGQVPWFGLLLTASLLASWSPPTTAQVTVMAFPLHAAEGNNVILVVYNMMKGVSAFSWHKGSTTSTNAEIVRFVTGTNKTIKGPVHSGRETLYSNGSLLIQRVTMKDTGVYTIEMTDQNYRRRVLTGQFHVHTLLLKSNITSNNSNPVEGDDSVSLTCDSYTDPDNITYLWSRNGESLSEGDRLKLSEGNRTLTLLNVTRNDTGPYVCETRNPVSVNRSDPFSLNIIYGPDTPIISPSDIYLHPGSNLNLSCHAASNPPAQYFWLINEKPHASSQELFIPNITTNNSGTYTCFVNNSVTGLSRTTVKNITVLEPVTQPSLQVTNTTVKELDSVTLTCLSKDRQAHIHWIFNNDTLLITEKMTTSQAGLILKIDPIKREDAGEYQCEISNPVSVKRSNSIKLEVIFDSTYDISDVPIAVIITGAVAGVILIAGLAYRLCSRKSRWGSDQRDLTEHKPSASNHNLAPSDNSPNKVDDVAYTVLNFNSQQPNRPTSAPSSPRATETVYSEVKKK</sequence>
<comment type="function">
    <text>Controls energy balance and peripheral insulin action. Involved in the regulation of feeding behavior particularly in the ventromedial nucleus of hypothalamus (VMH) regulation of food intake. Has a role in the regulation of metabolic rate and insulin sensitivity or resistance via effects on brown adipogenesis, sympathetic nervous outflow to brown adipose tissue, spontaneous activity and energy expenditure in skeletal muscle. In case of murine coronavirus (MHV) infection, does probably not serve as functional receptor for the virus.</text>
</comment>
<comment type="function">
    <text>Isoform 2 may be an adhesion molecule contributing to cell to cell adhesion between elongating spermatids and Sertoli cells within the seminiferous epithelium.</text>
</comment>
<comment type="subunit">
    <text evidence="12 13">Interacts weakly with MHV spike protein in tissue culture.</text>
</comment>
<comment type="subcellular location">
    <subcellularLocation>
        <location evidence="11">Cell membrane</location>
        <topology evidence="11">Single-pass type I membrane protein</topology>
    </subcellularLocation>
    <text>Localizes to sites on the plasma membrane of elongating spermatids where Sertoli cells make contact.</text>
</comment>
<comment type="alternative products">
    <event type="alternative splicing"/>
    <isoform>
        <id>Q925P2-1</id>
        <name>1</name>
        <name>Bgp2</name>
        <sequence type="displayed"/>
    </isoform>
    <isoform>
        <id>Q925P2-2</id>
        <name>2</name>
        <name>Bgp2</name>
        <name>Bgp2L</name>
        <name>Ceacam2-Long</name>
        <name>Ceacam2-L</name>
        <sequence type="described" ref="VSP_025300"/>
    </isoform>
    <isoform>
        <id>Q925P2-3</id>
        <name>3</name>
        <name>Bgp2</name>
        <name>Bgp2S</name>
        <name>Ceacam2-Short</name>
        <name>Ceacam2-S</name>
        <sequence type="described" ref="VSP_025300 VSP_025301"/>
    </isoform>
</comment>
<comment type="tissue specificity">
    <text evidence="6 7 9 11 12">Isoform 2 is detected in elongating spermatids within the seminiferous epithelium (at protein level). Expressed in kidney, colon, uterus, gut mononuclear cells, crypt epithelia of intestinal tissues, and to a lesser extent, in spleen. Expressed in brain including VMH, globus pallidus, ventral pallidum, striatum, olfactory bulb and hippocampus. Also detected in rectal carcinoma cell line CMT93. Isoform 2 and isoform 3 are expressed in testis. Isoform 2 is detected in seminiferous tubule, not detected in epididymal spermatozoa. Also not observed on spermatogonia, spermatocytes, round spermatids or somatic Sertoli cells. During stages I-VII of spermatogenesis, detected on the elongating spermatids. At spermiation (stage VIII) and subsequent stages IX-XII, levels are drastically reduced or absent in the seminiferous tubules. Sometimes weakly detected in the apical region of stage-VIII seminiferous epithelium. Isoform 2 level is very low in stomach, kidney, intestine, liver and spleen.</text>
</comment>
<comment type="developmental stage">
    <text evidence="7 11">Expressed throughout embryonic development. Isoform 2 first appears faintly in the testis 3 weeks into postnatal development and its expression level increases after 5 weeks.</text>
</comment>
<comment type="induction">
    <text evidence="9">Levels in brain increase at fasting and decrease at 4 and 7 hours of refeeding.</text>
</comment>
<comment type="disruption phenotype">
    <text evidence="9 10">Sexually dimorphic effect. Homozygous null mutant female mice exhibit obesity that results from hyperphagia and reduced energy expenditure. Hyperphagia leads to peripheral insulin resistance. Insulin action is normal in liver but is compromised in skeletal muscle; the mice have incomplete fatty acid oxidation and impaired glucose uptake and disposal. Hyperphagia appears to result partly from increased hyperinsulinemia-induced hypothalamic fatty acid synthase levels and activity. Hyperinsulinemia is caused by increased insulin secretion. Homozygous null mutant male mice show total fat mass reduction, which ows to the hypermetabolic state despite hyperphagia. They also exhibit insulin sensitivity with elevated beta-oxidation in skeletal muscle, which is likely to offset the effects of increased food intake. Both males and females have increased brown adipogenesis. However, only males have increased activation of sympathetic tone regulation of adipose tissue and increased spontaneous activity.</text>
</comment>
<comment type="miscellaneous">
    <text>The human orthologous protein seems not to exist. In mice, both Ceacam1 and Ceacam2 are the paralogs of human CEACAM1.</text>
</comment>
<comment type="similarity">
    <text evidence="18">Belongs to the immunoglobulin superfamily. CEA family.</text>
</comment>